<name>GLMM_SALPK</name>
<accession>B5BGK0</accession>
<keyword id="KW-0413">Isomerase</keyword>
<keyword id="KW-0460">Magnesium</keyword>
<keyword id="KW-0479">Metal-binding</keyword>
<keyword id="KW-0597">Phosphoprotein</keyword>
<sequence length="445" mass="47455">MSNRKYFGTDGIRGRVGNAPITPDFVLKLGWAAGKVLARHGSRKIIIGKDTRISGYMLESALEAGLAAAGLSASFTGPMPTPAVAYLTRTFRAEAGIVISASHNPFYDNGIKFFSIDGTKLPDDVEEAIEAEMEKEITCVDSAELGKASRIVDAAGRYIEFCKGTFPNELSLNGLKVVVDCANGATYHIAPNVLRELGATVIAIGCEPNGVNINEEVGATDVRALQARVLVEKADLGIALDGDGDRVIMVDHEGNKVDGDQIMYIIAREGLRQGQLRGGAVGTLMSNMGLELALKQLGIPFARAKVGDRYVLEKLQEKGWRIGAENSGHVILLDKTTTGDGIVAGLQVLAAMVRNHMSLHDLCSGMKMFPQILVNVRYTAGSGDPLENDAVKAVTADVEATLGNRGRVLLRKSGTEPLIRVMVEGEDEAQVTAFAHRIADAVKAV</sequence>
<proteinExistence type="inferred from homology"/>
<reference key="1">
    <citation type="journal article" date="2009" name="BMC Genomics">
        <title>Pseudogene accumulation in the evolutionary histories of Salmonella enterica serovars Paratyphi A and Typhi.</title>
        <authorList>
            <person name="Holt K.E."/>
            <person name="Thomson N.R."/>
            <person name="Wain J."/>
            <person name="Langridge G.C."/>
            <person name="Hasan R."/>
            <person name="Bhutta Z.A."/>
            <person name="Quail M.A."/>
            <person name="Norbertczak H."/>
            <person name="Walker D."/>
            <person name="Simmonds M."/>
            <person name="White B."/>
            <person name="Bason N."/>
            <person name="Mungall K."/>
            <person name="Dougan G."/>
            <person name="Parkhill J."/>
        </authorList>
    </citation>
    <scope>NUCLEOTIDE SEQUENCE [LARGE SCALE GENOMIC DNA]</scope>
    <source>
        <strain>AKU_12601</strain>
    </source>
</reference>
<comment type="function">
    <text evidence="1">Catalyzes the conversion of glucosamine-6-phosphate to glucosamine-1-phosphate.</text>
</comment>
<comment type="catalytic activity">
    <reaction evidence="1">
        <text>alpha-D-glucosamine 1-phosphate = D-glucosamine 6-phosphate</text>
        <dbReference type="Rhea" id="RHEA:23424"/>
        <dbReference type="ChEBI" id="CHEBI:58516"/>
        <dbReference type="ChEBI" id="CHEBI:58725"/>
        <dbReference type="EC" id="5.4.2.10"/>
    </reaction>
</comment>
<comment type="cofactor">
    <cofactor evidence="1">
        <name>Mg(2+)</name>
        <dbReference type="ChEBI" id="CHEBI:18420"/>
    </cofactor>
    <text evidence="1">Binds 1 Mg(2+) ion per subunit.</text>
</comment>
<comment type="PTM">
    <text evidence="1">Activated by phosphorylation.</text>
</comment>
<comment type="similarity">
    <text evidence="1">Belongs to the phosphohexose mutase family.</text>
</comment>
<evidence type="ECO:0000255" key="1">
    <source>
        <dbReference type="HAMAP-Rule" id="MF_01554"/>
    </source>
</evidence>
<dbReference type="EC" id="5.4.2.10" evidence="1"/>
<dbReference type="EMBL" id="FM200053">
    <property type="protein sequence ID" value="CAR61198.1"/>
    <property type="molecule type" value="Genomic_DNA"/>
</dbReference>
<dbReference type="RefSeq" id="WP_000071174.1">
    <property type="nucleotide sequence ID" value="NC_011147.1"/>
</dbReference>
<dbReference type="SMR" id="B5BGK0"/>
<dbReference type="KEGG" id="sek:SSPA2949"/>
<dbReference type="HOGENOM" id="CLU_016950_7_0_6"/>
<dbReference type="Proteomes" id="UP000001869">
    <property type="component" value="Chromosome"/>
</dbReference>
<dbReference type="GO" id="GO:0005829">
    <property type="term" value="C:cytosol"/>
    <property type="evidence" value="ECO:0007669"/>
    <property type="project" value="TreeGrafter"/>
</dbReference>
<dbReference type="GO" id="GO:0000287">
    <property type="term" value="F:magnesium ion binding"/>
    <property type="evidence" value="ECO:0007669"/>
    <property type="project" value="UniProtKB-UniRule"/>
</dbReference>
<dbReference type="GO" id="GO:0008966">
    <property type="term" value="F:phosphoglucosamine mutase activity"/>
    <property type="evidence" value="ECO:0007669"/>
    <property type="project" value="UniProtKB-UniRule"/>
</dbReference>
<dbReference type="GO" id="GO:0004615">
    <property type="term" value="F:phosphomannomutase activity"/>
    <property type="evidence" value="ECO:0007669"/>
    <property type="project" value="TreeGrafter"/>
</dbReference>
<dbReference type="GO" id="GO:0005975">
    <property type="term" value="P:carbohydrate metabolic process"/>
    <property type="evidence" value="ECO:0007669"/>
    <property type="project" value="InterPro"/>
</dbReference>
<dbReference type="GO" id="GO:0009252">
    <property type="term" value="P:peptidoglycan biosynthetic process"/>
    <property type="evidence" value="ECO:0007669"/>
    <property type="project" value="TreeGrafter"/>
</dbReference>
<dbReference type="GO" id="GO:0006048">
    <property type="term" value="P:UDP-N-acetylglucosamine biosynthetic process"/>
    <property type="evidence" value="ECO:0007669"/>
    <property type="project" value="TreeGrafter"/>
</dbReference>
<dbReference type="CDD" id="cd05802">
    <property type="entry name" value="GlmM"/>
    <property type="match status" value="1"/>
</dbReference>
<dbReference type="FunFam" id="3.30.310.50:FF:000001">
    <property type="entry name" value="Phosphoglucosamine mutase"/>
    <property type="match status" value="1"/>
</dbReference>
<dbReference type="FunFam" id="3.40.120.10:FF:000001">
    <property type="entry name" value="Phosphoglucosamine mutase"/>
    <property type="match status" value="1"/>
</dbReference>
<dbReference type="FunFam" id="3.40.120.10:FF:000002">
    <property type="entry name" value="Phosphoglucosamine mutase"/>
    <property type="match status" value="1"/>
</dbReference>
<dbReference type="Gene3D" id="3.40.120.10">
    <property type="entry name" value="Alpha-D-Glucose-1,6-Bisphosphate, subunit A, domain 3"/>
    <property type="match status" value="3"/>
</dbReference>
<dbReference type="Gene3D" id="3.30.310.50">
    <property type="entry name" value="Alpha-D-phosphohexomutase, C-terminal domain"/>
    <property type="match status" value="1"/>
</dbReference>
<dbReference type="HAMAP" id="MF_01554_B">
    <property type="entry name" value="GlmM_B"/>
    <property type="match status" value="1"/>
</dbReference>
<dbReference type="InterPro" id="IPR005844">
    <property type="entry name" value="A-D-PHexomutase_a/b/a-I"/>
</dbReference>
<dbReference type="InterPro" id="IPR016055">
    <property type="entry name" value="A-D-PHexomutase_a/b/a-I/II/III"/>
</dbReference>
<dbReference type="InterPro" id="IPR005845">
    <property type="entry name" value="A-D-PHexomutase_a/b/a-II"/>
</dbReference>
<dbReference type="InterPro" id="IPR005846">
    <property type="entry name" value="A-D-PHexomutase_a/b/a-III"/>
</dbReference>
<dbReference type="InterPro" id="IPR005843">
    <property type="entry name" value="A-D-PHexomutase_C"/>
</dbReference>
<dbReference type="InterPro" id="IPR036900">
    <property type="entry name" value="A-D-PHexomutase_C_sf"/>
</dbReference>
<dbReference type="InterPro" id="IPR016066">
    <property type="entry name" value="A-D-PHexomutase_CS"/>
</dbReference>
<dbReference type="InterPro" id="IPR005841">
    <property type="entry name" value="Alpha-D-phosphohexomutase_SF"/>
</dbReference>
<dbReference type="InterPro" id="IPR006352">
    <property type="entry name" value="GlmM_bact"/>
</dbReference>
<dbReference type="InterPro" id="IPR050060">
    <property type="entry name" value="Phosphoglucosamine_mutase"/>
</dbReference>
<dbReference type="NCBIfam" id="TIGR01455">
    <property type="entry name" value="glmM"/>
    <property type="match status" value="1"/>
</dbReference>
<dbReference type="NCBIfam" id="NF008139">
    <property type="entry name" value="PRK10887.1"/>
    <property type="match status" value="1"/>
</dbReference>
<dbReference type="PANTHER" id="PTHR42946:SF1">
    <property type="entry name" value="PHOSPHOGLUCOMUTASE (ALPHA-D-GLUCOSE-1,6-BISPHOSPHATE-DEPENDENT)"/>
    <property type="match status" value="1"/>
</dbReference>
<dbReference type="PANTHER" id="PTHR42946">
    <property type="entry name" value="PHOSPHOHEXOSE MUTASE"/>
    <property type="match status" value="1"/>
</dbReference>
<dbReference type="Pfam" id="PF02878">
    <property type="entry name" value="PGM_PMM_I"/>
    <property type="match status" value="1"/>
</dbReference>
<dbReference type="Pfam" id="PF02879">
    <property type="entry name" value="PGM_PMM_II"/>
    <property type="match status" value="1"/>
</dbReference>
<dbReference type="Pfam" id="PF02880">
    <property type="entry name" value="PGM_PMM_III"/>
    <property type="match status" value="1"/>
</dbReference>
<dbReference type="Pfam" id="PF00408">
    <property type="entry name" value="PGM_PMM_IV"/>
    <property type="match status" value="1"/>
</dbReference>
<dbReference type="PRINTS" id="PR00509">
    <property type="entry name" value="PGMPMM"/>
</dbReference>
<dbReference type="SUPFAM" id="SSF55957">
    <property type="entry name" value="Phosphoglucomutase, C-terminal domain"/>
    <property type="match status" value="1"/>
</dbReference>
<dbReference type="SUPFAM" id="SSF53738">
    <property type="entry name" value="Phosphoglucomutase, first 3 domains"/>
    <property type="match status" value="3"/>
</dbReference>
<dbReference type="PROSITE" id="PS00710">
    <property type="entry name" value="PGM_PMM"/>
    <property type="match status" value="1"/>
</dbReference>
<gene>
    <name evidence="1" type="primary">glmM</name>
    <name type="ordered locus">SSPA2949</name>
</gene>
<feature type="chain" id="PRO_1000201139" description="Phosphoglucosamine mutase">
    <location>
        <begin position="1"/>
        <end position="445"/>
    </location>
</feature>
<feature type="active site" description="Phosphoserine intermediate" evidence="1">
    <location>
        <position position="102"/>
    </location>
</feature>
<feature type="binding site" description="via phosphate group" evidence="1">
    <location>
        <position position="102"/>
    </location>
    <ligand>
        <name>Mg(2+)</name>
        <dbReference type="ChEBI" id="CHEBI:18420"/>
    </ligand>
</feature>
<feature type="binding site" evidence="1">
    <location>
        <position position="241"/>
    </location>
    <ligand>
        <name>Mg(2+)</name>
        <dbReference type="ChEBI" id="CHEBI:18420"/>
    </ligand>
</feature>
<feature type="binding site" evidence="1">
    <location>
        <position position="243"/>
    </location>
    <ligand>
        <name>Mg(2+)</name>
        <dbReference type="ChEBI" id="CHEBI:18420"/>
    </ligand>
</feature>
<feature type="binding site" evidence="1">
    <location>
        <position position="245"/>
    </location>
    <ligand>
        <name>Mg(2+)</name>
        <dbReference type="ChEBI" id="CHEBI:18420"/>
    </ligand>
</feature>
<feature type="modified residue" description="Phosphoserine" evidence="1">
    <location>
        <position position="102"/>
    </location>
</feature>
<protein>
    <recommendedName>
        <fullName evidence="1">Phosphoglucosamine mutase</fullName>
        <ecNumber evidence="1">5.4.2.10</ecNumber>
    </recommendedName>
</protein>
<organism>
    <name type="scientific">Salmonella paratyphi A (strain AKU_12601)</name>
    <dbReference type="NCBI Taxonomy" id="554290"/>
    <lineage>
        <taxon>Bacteria</taxon>
        <taxon>Pseudomonadati</taxon>
        <taxon>Pseudomonadota</taxon>
        <taxon>Gammaproteobacteria</taxon>
        <taxon>Enterobacterales</taxon>
        <taxon>Enterobacteriaceae</taxon>
        <taxon>Salmonella</taxon>
    </lineage>
</organism>